<comment type="function">
    <text evidence="1">Cell wall formation. Adds enolpyruvyl to UDP-N-acetylglucosamine.</text>
</comment>
<comment type="catalytic activity">
    <reaction evidence="1">
        <text>phosphoenolpyruvate + UDP-N-acetyl-alpha-D-glucosamine = UDP-N-acetyl-3-O-(1-carboxyvinyl)-alpha-D-glucosamine + phosphate</text>
        <dbReference type="Rhea" id="RHEA:18681"/>
        <dbReference type="ChEBI" id="CHEBI:43474"/>
        <dbReference type="ChEBI" id="CHEBI:57705"/>
        <dbReference type="ChEBI" id="CHEBI:58702"/>
        <dbReference type="ChEBI" id="CHEBI:68483"/>
        <dbReference type="EC" id="2.5.1.7"/>
    </reaction>
</comment>
<comment type="pathway">
    <text evidence="1">Cell wall biogenesis; peptidoglycan biosynthesis.</text>
</comment>
<comment type="subcellular location">
    <subcellularLocation>
        <location evidence="1">Cytoplasm</location>
    </subcellularLocation>
</comment>
<comment type="similarity">
    <text evidence="1">Belongs to the EPSP synthase family. MurA subfamily.</text>
</comment>
<evidence type="ECO:0000255" key="1">
    <source>
        <dbReference type="HAMAP-Rule" id="MF_00111"/>
    </source>
</evidence>
<accession>Q65DX8</accession>
<accession>Q62PE9</accession>
<organism>
    <name type="scientific">Bacillus licheniformis (strain ATCC 14580 / DSM 13 / JCM 2505 / CCUG 7422 / NBRC 12200 / NCIMB 9375 / NCTC 10341 / NRRL NRS-1264 / Gibson 46)</name>
    <dbReference type="NCBI Taxonomy" id="279010"/>
    <lineage>
        <taxon>Bacteria</taxon>
        <taxon>Bacillati</taxon>
        <taxon>Bacillota</taxon>
        <taxon>Bacilli</taxon>
        <taxon>Bacillales</taxon>
        <taxon>Bacillaceae</taxon>
        <taxon>Bacillus</taxon>
    </lineage>
</organism>
<gene>
    <name evidence="1" type="primary">murA1</name>
    <name type="synonym">murAA</name>
    <name type="ordered locus">BLi03922</name>
    <name type="ordered locus">BL04004</name>
</gene>
<keyword id="KW-0131">Cell cycle</keyword>
<keyword id="KW-0132">Cell division</keyword>
<keyword id="KW-0133">Cell shape</keyword>
<keyword id="KW-0961">Cell wall biogenesis/degradation</keyword>
<keyword id="KW-0963">Cytoplasm</keyword>
<keyword id="KW-0573">Peptidoglycan synthesis</keyword>
<keyword id="KW-0670">Pyruvate</keyword>
<keyword id="KW-1185">Reference proteome</keyword>
<keyword id="KW-0808">Transferase</keyword>
<name>MURA1_BACLD</name>
<protein>
    <recommendedName>
        <fullName evidence="1">UDP-N-acetylglucosamine 1-carboxyvinyltransferase 1</fullName>
        <ecNumber evidence="1">2.5.1.7</ecNumber>
    </recommendedName>
    <alternativeName>
        <fullName evidence="1">Enoylpyruvate transferase 1</fullName>
    </alternativeName>
    <alternativeName>
        <fullName evidence="1">UDP-N-acetylglucosamine enolpyruvyl transferase 1</fullName>
        <shortName evidence="1">EPT 1</shortName>
    </alternativeName>
</protein>
<proteinExistence type="inferred from homology"/>
<sequence length="436" mass="46556">MEKIIVRGGRKLNGTVKVEGAKNAVLPVIAASLLASEEKSVICDVPTLSDVYTINEVLRHLGASVHFENNTVTVDASRTLSTEAPFEYVRKMRASVLVMGPLLARTGHSRVALPGGCAIGSRPIDQHLKGFEAMGAKIKVGNGFIEATVEGRLQGAKIYLDFPSVGATENLIMAAALAEGTTTLENAAKEPEIVDLANYINAMGGKIRGAGTGTIKIEGVKALHGAKHTIIPDRIEAGTFMVAAAITEGNVLVKGAVPEHLTSLIAKMEEMGVQILEEGDGLRIIGPSELKPIDLKTMPHPGFPTDMQSQMMALLMRANGTSMITETVFENRFMHAEEFRRMNGDIKIEGRSVIINGPVQLQGAEVAATDLRAGAALILAGLVADGHTRVTELKHLDRGYVNFHQKLAGLGADIERVNDEEAVHIENKEVVSDLNA</sequence>
<dbReference type="EC" id="2.5.1.7" evidence="1"/>
<dbReference type="EMBL" id="AE017333">
    <property type="protein sequence ID" value="AAU42736.1"/>
    <property type="molecule type" value="Genomic_DNA"/>
</dbReference>
<dbReference type="EMBL" id="CP000002">
    <property type="protein sequence ID" value="AAU25362.1"/>
    <property type="molecule type" value="Genomic_DNA"/>
</dbReference>
<dbReference type="SMR" id="Q65DX8"/>
<dbReference type="STRING" id="279010.BL04004"/>
<dbReference type="KEGG" id="bld:BLi03922"/>
<dbReference type="KEGG" id="bli:BL04004"/>
<dbReference type="eggNOG" id="COG0766">
    <property type="taxonomic scope" value="Bacteria"/>
</dbReference>
<dbReference type="HOGENOM" id="CLU_027387_0_0_9"/>
<dbReference type="UniPathway" id="UPA00219"/>
<dbReference type="Proteomes" id="UP000000606">
    <property type="component" value="Chromosome"/>
</dbReference>
<dbReference type="GO" id="GO:0005737">
    <property type="term" value="C:cytoplasm"/>
    <property type="evidence" value="ECO:0007669"/>
    <property type="project" value="UniProtKB-SubCell"/>
</dbReference>
<dbReference type="GO" id="GO:0008760">
    <property type="term" value="F:UDP-N-acetylglucosamine 1-carboxyvinyltransferase activity"/>
    <property type="evidence" value="ECO:0007669"/>
    <property type="project" value="UniProtKB-UniRule"/>
</dbReference>
<dbReference type="GO" id="GO:0051301">
    <property type="term" value="P:cell division"/>
    <property type="evidence" value="ECO:0007669"/>
    <property type="project" value="UniProtKB-KW"/>
</dbReference>
<dbReference type="GO" id="GO:0071555">
    <property type="term" value="P:cell wall organization"/>
    <property type="evidence" value="ECO:0007669"/>
    <property type="project" value="UniProtKB-KW"/>
</dbReference>
<dbReference type="GO" id="GO:0009252">
    <property type="term" value="P:peptidoglycan biosynthetic process"/>
    <property type="evidence" value="ECO:0007669"/>
    <property type="project" value="UniProtKB-UniRule"/>
</dbReference>
<dbReference type="GO" id="GO:0008360">
    <property type="term" value="P:regulation of cell shape"/>
    <property type="evidence" value="ECO:0007669"/>
    <property type="project" value="UniProtKB-KW"/>
</dbReference>
<dbReference type="GO" id="GO:0019277">
    <property type="term" value="P:UDP-N-acetylgalactosamine biosynthetic process"/>
    <property type="evidence" value="ECO:0007669"/>
    <property type="project" value="InterPro"/>
</dbReference>
<dbReference type="CDD" id="cd01555">
    <property type="entry name" value="UdpNAET"/>
    <property type="match status" value="1"/>
</dbReference>
<dbReference type="FunFam" id="3.65.10.10:FF:000001">
    <property type="entry name" value="UDP-N-acetylglucosamine 1-carboxyvinyltransferase"/>
    <property type="match status" value="1"/>
</dbReference>
<dbReference type="Gene3D" id="3.65.10.10">
    <property type="entry name" value="Enolpyruvate transferase domain"/>
    <property type="match status" value="2"/>
</dbReference>
<dbReference type="HAMAP" id="MF_00111">
    <property type="entry name" value="MurA"/>
    <property type="match status" value="1"/>
</dbReference>
<dbReference type="InterPro" id="IPR001986">
    <property type="entry name" value="Enolpyruvate_Tfrase_dom"/>
</dbReference>
<dbReference type="InterPro" id="IPR036968">
    <property type="entry name" value="Enolpyruvate_Tfrase_sf"/>
</dbReference>
<dbReference type="InterPro" id="IPR050068">
    <property type="entry name" value="MurA_subfamily"/>
</dbReference>
<dbReference type="InterPro" id="IPR013792">
    <property type="entry name" value="RNA3'P_cycl/enolpyr_Trfase_a/b"/>
</dbReference>
<dbReference type="InterPro" id="IPR005750">
    <property type="entry name" value="UDP_GlcNAc_COvinyl_MurA"/>
</dbReference>
<dbReference type="NCBIfam" id="TIGR01072">
    <property type="entry name" value="murA"/>
    <property type="match status" value="1"/>
</dbReference>
<dbReference type="NCBIfam" id="NF006873">
    <property type="entry name" value="PRK09369.1"/>
    <property type="match status" value="1"/>
</dbReference>
<dbReference type="PANTHER" id="PTHR43783">
    <property type="entry name" value="UDP-N-ACETYLGLUCOSAMINE 1-CARBOXYVINYLTRANSFERASE"/>
    <property type="match status" value="1"/>
</dbReference>
<dbReference type="PANTHER" id="PTHR43783:SF1">
    <property type="entry name" value="UDP-N-ACETYLGLUCOSAMINE 1-CARBOXYVINYLTRANSFERASE"/>
    <property type="match status" value="1"/>
</dbReference>
<dbReference type="Pfam" id="PF00275">
    <property type="entry name" value="EPSP_synthase"/>
    <property type="match status" value="1"/>
</dbReference>
<dbReference type="SUPFAM" id="SSF55205">
    <property type="entry name" value="EPT/RTPC-like"/>
    <property type="match status" value="1"/>
</dbReference>
<reference key="1">
    <citation type="journal article" date="2004" name="J. Mol. Microbiol. Biotechnol.">
        <title>The complete genome sequence of Bacillus licheniformis DSM13, an organism with great industrial potential.</title>
        <authorList>
            <person name="Veith B."/>
            <person name="Herzberg C."/>
            <person name="Steckel S."/>
            <person name="Feesche J."/>
            <person name="Maurer K.H."/>
            <person name="Ehrenreich P."/>
            <person name="Baeumer S."/>
            <person name="Henne A."/>
            <person name="Liesegang H."/>
            <person name="Merkl R."/>
            <person name="Ehrenreich A."/>
            <person name="Gottschalk G."/>
        </authorList>
    </citation>
    <scope>NUCLEOTIDE SEQUENCE [LARGE SCALE GENOMIC DNA]</scope>
    <source>
        <strain>ATCC 14580 / DSM 13 / JCM 2505 / CCUG 7422 / NBRC 12200 / NCIMB 9375 / NCTC 10341 / NRRL NRS-1264 / Gibson 46</strain>
    </source>
</reference>
<reference key="2">
    <citation type="journal article" date="2004" name="Genome Biol.">
        <title>Complete genome sequence of the industrial bacterium Bacillus licheniformis and comparisons with closely related Bacillus species.</title>
        <authorList>
            <person name="Rey M.W."/>
            <person name="Ramaiya P."/>
            <person name="Nelson B.A."/>
            <person name="Brody-Karpin S.D."/>
            <person name="Zaretsky E.J."/>
            <person name="Tang M."/>
            <person name="Lopez de Leon A."/>
            <person name="Xiang H."/>
            <person name="Gusti V."/>
            <person name="Clausen I.G."/>
            <person name="Olsen P.B."/>
            <person name="Rasmussen M.D."/>
            <person name="Andersen J.T."/>
            <person name="Joergensen P.L."/>
            <person name="Larsen T.S."/>
            <person name="Sorokin A."/>
            <person name="Bolotin A."/>
            <person name="Lapidus A."/>
            <person name="Galleron N."/>
            <person name="Ehrlich S.D."/>
            <person name="Berka R.M."/>
        </authorList>
    </citation>
    <scope>NUCLEOTIDE SEQUENCE [LARGE SCALE GENOMIC DNA]</scope>
    <source>
        <strain>ATCC 14580 / DSM 13 / JCM 2505 / CCUG 7422 / NBRC 12200 / NCIMB 9375 / NCTC 10341 / NRRL NRS-1264 / Gibson 46</strain>
    </source>
</reference>
<feature type="chain" id="PRO_0000231163" description="UDP-N-acetylglucosamine 1-carboxyvinyltransferase 1">
    <location>
        <begin position="1"/>
        <end position="436"/>
    </location>
</feature>
<feature type="active site" description="Proton donor" evidence="1">
    <location>
        <position position="117"/>
    </location>
</feature>
<feature type="binding site" evidence="1">
    <location>
        <begin position="22"/>
        <end position="23"/>
    </location>
    <ligand>
        <name>phosphoenolpyruvate</name>
        <dbReference type="ChEBI" id="CHEBI:58702"/>
    </ligand>
</feature>
<feature type="binding site" evidence="1">
    <location>
        <position position="93"/>
    </location>
    <ligand>
        <name>UDP-N-acetyl-alpha-D-glucosamine</name>
        <dbReference type="ChEBI" id="CHEBI:57705"/>
    </ligand>
</feature>
<feature type="binding site" evidence="1">
    <location>
        <begin position="122"/>
        <end position="126"/>
    </location>
    <ligand>
        <name>UDP-N-acetyl-alpha-D-glucosamine</name>
        <dbReference type="ChEBI" id="CHEBI:57705"/>
    </ligand>
</feature>
<feature type="binding site" evidence="1">
    <location>
        <position position="306"/>
    </location>
    <ligand>
        <name>UDP-N-acetyl-alpha-D-glucosamine</name>
        <dbReference type="ChEBI" id="CHEBI:57705"/>
    </ligand>
</feature>
<feature type="binding site" evidence="1">
    <location>
        <position position="328"/>
    </location>
    <ligand>
        <name>UDP-N-acetyl-alpha-D-glucosamine</name>
        <dbReference type="ChEBI" id="CHEBI:57705"/>
    </ligand>
</feature>
<feature type="modified residue" description="2-(S-cysteinyl)pyruvic acid O-phosphothioketal" evidence="1">
    <location>
        <position position="117"/>
    </location>
</feature>